<sequence length="222" mass="23935">MDPTDLSFSPDEINKLIETGLNTVEYFTSQQVTGTSSLGKNTIPPGVTGLLTNAAEAKIQESTNHQKGSVGGGAKPKKPRPKIAIVPADDKTVPGKPIPNPLLGLDSTPSTQTVLDLSGKTLPSGSYKGVKLAKFGKENLMTRFIEEPRENPIATSSPIDFKRGRDTGGFHRREYSIGWVGDEVKVTEWCNPSCSPITAAARRFECTCHQCPVTCSECERDT</sequence>
<keyword id="KW-0002">3D-structure</keyword>
<keyword id="KW-1035">Host cytoplasm</keyword>
<keyword id="KW-0945">Host-virus interaction</keyword>
<keyword id="KW-1090">Inhibition of host innate immune response by virus</keyword>
<keyword id="KW-1114">Inhibition of host interferon signaling pathway by virus</keyword>
<keyword id="KW-1089">Inhibition of host MDA5 by virus</keyword>
<keyword id="KW-1113">Inhibition of host RLR pathway by virus</keyword>
<keyword id="KW-1105">Inhibition of host STAT1 by virus</keyword>
<keyword id="KW-0922">Interferon antiviral system evasion</keyword>
<keyword id="KW-0479">Metal-binding</keyword>
<keyword id="KW-1185">Reference proteome</keyword>
<keyword id="KW-0691">RNA editing</keyword>
<keyword id="KW-0694">RNA-binding</keyword>
<keyword id="KW-0833">Ubl conjugation pathway</keyword>
<keyword id="KW-0899">Viral immunoevasion</keyword>
<keyword id="KW-0862">Zinc</keyword>
<name>V_PIV5</name>
<accession>P11207</accession>
<dbReference type="EMBL" id="J03142">
    <property type="protein sequence ID" value="AAA47882.1"/>
    <property type="molecule type" value="mRNA"/>
</dbReference>
<dbReference type="EMBL" id="AF052755">
    <property type="protein sequence ID" value="AAC95512.1"/>
    <property type="molecule type" value="Genomic_RNA"/>
</dbReference>
<dbReference type="PIR" id="A31594">
    <property type="entry name" value="MNNZSP"/>
</dbReference>
<dbReference type="PDB" id="2B5L">
    <property type="method" value="X-ray"/>
    <property type="resolution" value="2.85 A"/>
    <property type="chains" value="C/D=1-222"/>
</dbReference>
<dbReference type="PDB" id="2HYE">
    <property type="method" value="X-ray"/>
    <property type="resolution" value="3.10 A"/>
    <property type="chains" value="B=1-222"/>
</dbReference>
<dbReference type="PDB" id="2K48">
    <property type="method" value="NMR"/>
    <property type="chains" value="A=95-108"/>
</dbReference>
<dbReference type="PDB" id="4I1S">
    <property type="method" value="X-ray"/>
    <property type="resolution" value="2.29 A"/>
    <property type="chains" value="B=168-219"/>
</dbReference>
<dbReference type="PDBsum" id="2B5L"/>
<dbReference type="PDBsum" id="2HYE"/>
<dbReference type="PDBsum" id="2K48"/>
<dbReference type="PDBsum" id="4I1S"/>
<dbReference type="SMR" id="P11207"/>
<dbReference type="DIP" id="DIP-48759N"/>
<dbReference type="IntAct" id="P11207">
    <property type="interactions" value="12"/>
</dbReference>
<dbReference type="MINT" id="P11207"/>
<dbReference type="EvolutionaryTrace" id="P11207"/>
<dbReference type="Proteomes" id="UP000007232">
    <property type="component" value="Segment"/>
</dbReference>
<dbReference type="GO" id="GO:0030430">
    <property type="term" value="C:host cell cytoplasm"/>
    <property type="evidence" value="ECO:0007669"/>
    <property type="project" value="UniProtKB-SubCell"/>
</dbReference>
<dbReference type="GO" id="GO:0046872">
    <property type="term" value="F:metal ion binding"/>
    <property type="evidence" value="ECO:0007669"/>
    <property type="project" value="UniProtKB-KW"/>
</dbReference>
<dbReference type="GO" id="GO:0003723">
    <property type="term" value="F:RNA binding"/>
    <property type="evidence" value="ECO:0007669"/>
    <property type="project" value="UniProtKB-KW"/>
</dbReference>
<dbReference type="GO" id="GO:1990756">
    <property type="term" value="F:ubiquitin-like ligase-substrate adaptor activity"/>
    <property type="evidence" value="ECO:0000314"/>
    <property type="project" value="UniProt"/>
</dbReference>
<dbReference type="GO" id="GO:0039554">
    <property type="term" value="P:symbiont-mediated suppression of host cytoplasmic pattern recognition receptor signaling pathway via inhibition of MDA-5 activity"/>
    <property type="evidence" value="ECO:0000314"/>
    <property type="project" value="CACAO"/>
</dbReference>
<dbReference type="GO" id="GO:0039563">
    <property type="term" value="P:symbiont-mediated suppression of host JAK-STAT cascade via inhibition of STAT1 activity"/>
    <property type="evidence" value="ECO:0007669"/>
    <property type="project" value="UniProtKB-KW"/>
</dbReference>
<dbReference type="GO" id="GO:0039564">
    <property type="term" value="P:symbiont-mediated suppression of host JAK-STAT cascade via inhibition of STAT2 activity"/>
    <property type="evidence" value="ECO:0000314"/>
    <property type="project" value="UniProt"/>
</dbReference>
<dbReference type="GO" id="GO:0039502">
    <property type="term" value="P:symbiont-mediated suppression of host type I interferon-mediated signaling pathway"/>
    <property type="evidence" value="ECO:0007669"/>
    <property type="project" value="UniProtKB-KW"/>
</dbReference>
<dbReference type="FunFam" id="4.10.80.340:FF:000001">
    <property type="entry name" value="Protein V"/>
    <property type="match status" value="1"/>
</dbReference>
<dbReference type="Gene3D" id="4.10.80.340">
    <property type="match status" value="1"/>
</dbReference>
<dbReference type="InterPro" id="IPR024279">
    <property type="entry name" value="Paramyx_V_Zn-bd"/>
</dbReference>
<dbReference type="InterPro" id="IPR025909">
    <property type="entry name" value="Soyouz_module"/>
</dbReference>
<dbReference type="Pfam" id="PF14313">
    <property type="entry name" value="Soyouz_module"/>
    <property type="match status" value="1"/>
</dbReference>
<dbReference type="Pfam" id="PF13008">
    <property type="entry name" value="zf-Paramyx-P"/>
    <property type="match status" value="1"/>
</dbReference>
<comment type="function">
    <text evidence="2 5 7 8 9">Plays an essential role in the inhibition of host immune response. Prevents the establishment of cellular antiviral state by blocking interferon-alpha/beta (IFN-alpha/beta) production and signaling pathway. Interacts with host IFIH1/MDA5 and DHX58/LGP2 to inhibit the transduction pathway involved in the activation of IFN-beta promoter, thus protecting the virus against cell antiviral state. Efficiently blocks type I IFN signaling following infection by behaving as a substrate receptor for CUL4-DDB1 E3 ligase complex and targeting host STAT1 for proteasomal degradation. Blocks the type I interferon signaling pathway by disrupting the RIG-I signaling pathway (By similarity).</text>
</comment>
<comment type="subunit">
    <text evidence="4 6 8 9 11 13">Interacts with host DDB1, STAT2 and IFIH1/MDA5. Interacts with host RIGI regulatory protein (via CARDs domain) and host TRIM25 (via SPRY domain); these interactions prevent TRIM25-mediated ubiquitination of RIG-I and disrupts downstream RIG-I signaling (PubMed:29321315).</text>
</comment>
<comment type="interaction">
    <interactant intactId="EBI-6148694">
        <id>P11207</id>
    </interactant>
    <interactant intactId="EBI-350322">
        <id>Q16531</id>
        <label>DDB1</label>
    </interactant>
    <organismsDiffer>true</organismsDiffer>
    <experiments>4</experiments>
</comment>
<comment type="interaction">
    <interactant intactId="EBI-6148694">
        <id>P11207</id>
    </interactant>
    <interactant intactId="EBI-744193">
        <id>Q96C10</id>
        <label>DHX58</label>
    </interactant>
    <organismsDiffer>true</organismsDiffer>
    <experiments>2</experiments>
</comment>
<comment type="interaction">
    <interactant intactId="EBI-6148694">
        <id>P11207</id>
    </interactant>
    <interactant intactId="EBI-16019291">
        <id>Q8R5F7-1</id>
        <label>Ifih1</label>
    </interactant>
    <organismsDiffer>true</organismsDiffer>
    <experiments>3</experiments>
</comment>
<comment type="interaction">
    <interactant intactId="EBI-6148694">
        <id>P11207</id>
    </interactant>
    <interactant intactId="EBI-6115771">
        <id>Q9BYX4</id>
        <label>IFIH1</label>
    </interactant>
    <organismsDiffer>true</organismsDiffer>
    <experiments>3</experiments>
</comment>
<comment type="interaction">
    <interactant intactId="EBI-6148694">
        <id>P11207</id>
    </interactant>
    <interactant intactId="EBI-16032125">
        <id>A7LCX1</id>
        <label>MDA5</label>
    </interactant>
    <organismsDiffer>true</organismsDiffer>
    <experiments>2</experiments>
</comment>
<comment type="interaction">
    <interactant intactId="EBI-6148694">
        <id>P11207</id>
    </interactant>
    <interactant intactId="EBI-1546963">
        <id>P52630</id>
        <label>STAT2</label>
    </interactant>
    <organismsDiffer>true</organismsDiffer>
    <experiments>2</experiments>
</comment>
<comment type="subcellular location">
    <subcellularLocation>
        <location evidence="1">Host cytoplasm</location>
    </subcellularLocation>
</comment>
<comment type="RNA editing">
    <location>
        <position position="164" evidence="12"/>
    </location>
    <text>Partially edited. RNA editing at this position consists of an insertion of two guanine nucleotides. The sequence displayed here is the V protein, derived from the unedited RNA. The edited RNA gives rise to the P protein (AC P11208).</text>
</comment>
<comment type="similarity">
    <text evidence="14">Belongs to the paramyxoviruses V protein family.</text>
</comment>
<evidence type="ECO:0000250" key="1"/>
<evidence type="ECO:0000250" key="2">
    <source>
        <dbReference type="UniProtKB" id="Q9EMA9"/>
    </source>
</evidence>
<evidence type="ECO:0000256" key="3">
    <source>
        <dbReference type="SAM" id="MobiDB-lite"/>
    </source>
</evidence>
<evidence type="ECO:0000269" key="4">
    <source>
    </source>
</evidence>
<evidence type="ECO:0000269" key="5">
    <source>
    </source>
</evidence>
<evidence type="ECO:0000269" key="6">
    <source>
    </source>
</evidence>
<evidence type="ECO:0000269" key="7">
    <source>
    </source>
</evidence>
<evidence type="ECO:0000269" key="8">
    <source>
    </source>
</evidence>
<evidence type="ECO:0000269" key="9">
    <source>
    </source>
</evidence>
<evidence type="ECO:0000269" key="10">
    <source>
    </source>
</evidence>
<evidence type="ECO:0000269" key="11">
    <source>
    </source>
</evidence>
<evidence type="ECO:0000269" key="12">
    <source>
    </source>
</evidence>
<evidence type="ECO:0000269" key="13">
    <source>
    </source>
</evidence>
<evidence type="ECO:0000305" key="14"/>
<evidence type="ECO:0007744" key="15">
    <source>
        <dbReference type="PDB" id="2B5L"/>
    </source>
</evidence>
<evidence type="ECO:0007744" key="16">
    <source>
        <dbReference type="PDB" id="2HYE"/>
    </source>
</evidence>
<evidence type="ECO:0007744" key="17">
    <source>
        <dbReference type="PDB" id="4I1S"/>
    </source>
</evidence>
<evidence type="ECO:0007829" key="18">
    <source>
        <dbReference type="PDB" id="2B5L"/>
    </source>
</evidence>
<evidence type="ECO:0007829" key="19">
    <source>
        <dbReference type="PDB" id="4I1S"/>
    </source>
</evidence>
<proteinExistence type="evidence at protein level"/>
<protein>
    <recommendedName>
        <fullName>Non-structural protein V</fullName>
    </recommendedName>
</protein>
<organism>
    <name type="scientific">Parainfluenza virus 5 (strain W3)</name>
    <name type="common">PIV5</name>
    <name type="synonym">Simian virus 5</name>
    <dbReference type="NCBI Taxonomy" id="11208"/>
    <lineage>
        <taxon>Viruses</taxon>
        <taxon>Riboviria</taxon>
        <taxon>Orthornavirae</taxon>
        <taxon>Negarnaviricota</taxon>
        <taxon>Haploviricotina</taxon>
        <taxon>Monjiviricetes</taxon>
        <taxon>Mononegavirales</taxon>
        <taxon>Paramyxoviridae</taxon>
        <taxon>Rubulavirinae</taxon>
        <taxon>Orthorubulavirus</taxon>
        <taxon>Orthorubulavirus mammalis</taxon>
        <taxon>Mammalian orthorubulavirus 5</taxon>
    </lineage>
</organism>
<reference key="1">
    <citation type="journal article" date="1988" name="Cell">
        <title>Two mRNAs that differ by two nontemplated nucleotides encode the amino coterminal proteins P and V of the paramyxovirus SV5.</title>
        <authorList>
            <person name="Thomas S.M."/>
            <person name="Lamb R.A."/>
            <person name="Paterson R.G."/>
        </authorList>
    </citation>
    <scope>NUCLEOTIDE SEQUENCE [MRNA]</scope>
    <scope>RNA EDITING</scope>
</reference>
<reference key="2">
    <citation type="journal article" date="1996" name="Virology">
        <title>NP:P and NP:V interactions of the paramyxovirus simian virus 5 examined using a novel protein:protein capture assay.</title>
        <authorList>
            <person name="Randall R.E."/>
            <person name="Bermingham A."/>
        </authorList>
    </citation>
    <scope>INTERACTION WITH PROTEIN NP</scope>
</reference>
<reference key="3">
    <citation type="journal article" date="1997" name="Virology">
        <title>The RNA binding region of the paramyxovirus SV5 V and P proteins.</title>
        <authorList>
            <person name="Lin G.Y."/>
            <person name="Paterson R.G."/>
            <person name="Lamb R.A."/>
        </authorList>
    </citation>
    <scope>RNA-BINDING</scope>
</reference>
<reference key="4">
    <citation type="journal article" date="2004" name="Proc. Natl. Acad. Sci. U.S.A.">
        <title>The V proteins of paramyxoviruses bind the IFN-inducible RNA helicase, mda-5, and inhibit its activation of the IFN-beta promoter.</title>
        <authorList>
            <person name="Andrejeva J."/>
            <person name="Childs K.S."/>
            <person name="Young D.F."/>
            <person name="Carlos T.S."/>
            <person name="Stock N."/>
            <person name="Goodbourn S."/>
            <person name="Randall R.E."/>
        </authorList>
    </citation>
    <scope>INTERACTION WITH HUMAN IFIH1/MDA5</scope>
    <scope>INTERFERON EVASION</scope>
</reference>
<reference key="5">
    <citation type="journal article" date="2005" name="J. Gen. Virol.">
        <title>In vitro and in vivo specificity of ubiquitination and degradation of STAT1 and STAT2 by the V proteins of the paramyxoviruses simian virus 5 and human parainfluenza virus type 2.</title>
        <authorList>
            <person name="Precious B."/>
            <person name="Young D.F."/>
            <person name="Andrejeva L."/>
            <person name="Goodbourn S."/>
            <person name="Randall R.E."/>
        </authorList>
    </citation>
    <scope>UBIQUITINATION OF HUMAN STAT1 AND HUMAN STAT2</scope>
</reference>
<reference key="6">
    <citation type="journal article" date="2005" name="Virology">
        <title>The role of simian virus 5 V protein on viral RNA synthesis.</title>
        <authorList>
            <person name="Lin Y."/>
            <person name="Horvath F."/>
            <person name="Aligo J.A."/>
            <person name="Wilson R."/>
            <person name="He B."/>
        </authorList>
    </citation>
    <scope>FUNCTION</scope>
</reference>
<reference key="7">
    <citation type="journal article" date="2005" name="J. Virol.">
        <title>Simian virus 5 V protein acts as an adaptor, linking DDB1 to STAT2, to facilitate the ubiquitination of STAT1.</title>
        <authorList>
            <person name="Precious B."/>
            <person name="Childs K."/>
            <person name="Fitzpatrick-Swallow V."/>
            <person name="Goodbourn S."/>
            <person name="Randall R.E."/>
        </authorList>
    </citation>
    <scope>INTERACTION WITH HUMAN DDB1 AND HUMAN STAT2</scope>
</reference>
<reference key="8">
    <citation type="journal article" date="2012" name="J. Virol.">
        <title>Paramyxovirus V proteins interact with the RNA Helicase LGP2 to inhibit RIG-I-dependent interferon induction.</title>
        <authorList>
            <person name="Childs K."/>
            <person name="Randall R."/>
            <person name="Goodbourn S."/>
        </authorList>
    </citation>
    <scope>FUNCTION</scope>
    <scope>INTERACTION WITH HOST DHX58</scope>
</reference>
<reference key="9">
    <citation type="journal article" date="2018" name="J. Virol.">
        <title>Paramyxovirus V Proteins Interact with the RIG-I/TRIM25 Regulatory Complex and Inhibit RIG-I Signaling.</title>
        <authorList>
            <person name="Sanchez-Aparicio M.T."/>
            <person name="Feinman L.J."/>
            <person name="Garcia-Sastre A."/>
            <person name="Shaw M.L."/>
        </authorList>
    </citation>
    <scope>FUNCTION</scope>
    <scope>INTERACTION WITH HOST TRIM25</scope>
    <scope>INTERACTION WITH HOST RIGI</scope>
</reference>
<reference evidence="15" key="10">
    <citation type="journal article" date="2006" name="Cell">
        <title>Structure of DDB1 in complex with a paramyxovirus V protein: viral hijack of a propeller cluster in ubiquitin ligase.</title>
        <authorList>
            <person name="Li T."/>
            <person name="Chen X."/>
            <person name="Garbutt K.C."/>
            <person name="Zhou P."/>
            <person name="Zheng N."/>
        </authorList>
    </citation>
    <scope>X-RAY CRYSTALLOGRAPHY (2.85 ANGSTROMS) IN COMPLEX WITH ZN(2+)</scope>
    <scope>FUNCTION</scope>
</reference>
<reference evidence="16" key="11">
    <citation type="journal article" date="2006" name="Nature">
        <title>Molecular architecture and assembly of the DDB1-CUL4A ubiquitin ligase machinery.</title>
        <authorList>
            <person name="Angers S."/>
            <person name="Li T."/>
            <person name="Yi X."/>
            <person name="MacCoss M.J."/>
            <person name="Moon R.T."/>
            <person name="Zheng N."/>
        </authorList>
    </citation>
    <scope>X-RAY CRYSTALLOGRAPHY (3.1 ANGSTROMS) IN COMPLEX WITH HUMAN CUL4A; DDB1 AND ROC1</scope>
    <scope>FUNCTION</scope>
</reference>
<reference evidence="17" key="12">
    <citation type="journal article" date="2013" name="Science">
        <title>Paramyxovirus V proteins disrupt the fold of the RNA sensor MDA5 to inhibit antiviral signaling.</title>
        <authorList>
            <person name="Motz C."/>
            <person name="Schuhmann K.M."/>
            <person name="Kirchhofer A."/>
            <person name="Moldt M."/>
            <person name="Witte G."/>
            <person name="Conzelmann K.K."/>
            <person name="Hopfner K.P."/>
        </authorList>
    </citation>
    <scope>X-RAY CRYSTALLOGRAPHY (2.29 ANGSTROMS) OF 168-219 IN COMPLEX WITH ZN(2+)</scope>
</reference>
<feature type="chain" id="PRO_0000142830" description="Non-structural protein V">
    <location>
        <begin position="1"/>
        <end position="222"/>
    </location>
</feature>
<feature type="region of interest" description="Disordered" evidence="3">
    <location>
        <begin position="61"/>
        <end position="107"/>
    </location>
</feature>
<feature type="binding site" evidence="10 17">
    <location>
        <position position="171"/>
    </location>
    <ligand>
        <name>Zn(2+)</name>
        <dbReference type="ChEBI" id="CHEBI:29105"/>
        <label>1</label>
    </ligand>
</feature>
<feature type="binding site" evidence="7 8 10 15 16 17">
    <location>
        <position position="190"/>
    </location>
    <ligand>
        <name>Zn(2+)</name>
        <dbReference type="ChEBI" id="CHEBI:29105"/>
        <label>1</label>
    </ligand>
</feature>
<feature type="binding site" evidence="7 8 10 15 16 17">
    <location>
        <position position="194"/>
    </location>
    <ligand>
        <name>Zn(2+)</name>
        <dbReference type="ChEBI" id="CHEBI:29105"/>
        <label>2</label>
    </ligand>
</feature>
<feature type="binding site" evidence="7 10 15 17">
    <location>
        <position position="206"/>
    </location>
    <ligand>
        <name>Zn(2+)</name>
        <dbReference type="ChEBI" id="CHEBI:29105"/>
        <label>2</label>
    </ligand>
</feature>
<feature type="binding site" evidence="7 8 10 15 16 17">
    <location>
        <position position="208"/>
    </location>
    <ligand>
        <name>Zn(2+)</name>
        <dbReference type="ChEBI" id="CHEBI:29105"/>
        <label>2</label>
    </ligand>
</feature>
<feature type="binding site" evidence="7 8 10 15 16 17">
    <location>
        <position position="211"/>
    </location>
    <ligand>
        <name>Zn(2+)</name>
        <dbReference type="ChEBI" id="CHEBI:29105"/>
        <label>2</label>
    </ligand>
</feature>
<feature type="binding site" evidence="7 10 15 17">
    <location>
        <position position="215"/>
    </location>
    <ligand>
        <name>Zn(2+)</name>
        <dbReference type="ChEBI" id="CHEBI:29105"/>
        <label>1</label>
    </ligand>
</feature>
<feature type="binding site" evidence="7 8 10 15 16 17">
    <location>
        <position position="218"/>
    </location>
    <ligand>
        <name>Zn(2+)</name>
        <dbReference type="ChEBI" id="CHEBI:29105"/>
        <label>1</label>
    </ligand>
</feature>
<feature type="helix" evidence="18">
    <location>
        <begin position="23"/>
        <end position="32"/>
    </location>
</feature>
<feature type="strand" evidence="18">
    <location>
        <begin position="95"/>
        <end position="97"/>
    </location>
</feature>
<feature type="turn" evidence="18">
    <location>
        <begin position="101"/>
        <end position="104"/>
    </location>
</feature>
<feature type="strand" evidence="18">
    <location>
        <begin position="109"/>
        <end position="116"/>
    </location>
</feature>
<feature type="strand" evidence="18">
    <location>
        <begin position="119"/>
        <end position="121"/>
    </location>
</feature>
<feature type="helix" evidence="18">
    <location>
        <begin position="127"/>
        <end position="138"/>
    </location>
</feature>
<feature type="strand" evidence="18">
    <location>
        <begin position="143"/>
        <end position="146"/>
    </location>
</feature>
<feature type="strand" evidence="18">
    <location>
        <begin position="164"/>
        <end position="167"/>
    </location>
</feature>
<feature type="strand" evidence="19">
    <location>
        <begin position="170"/>
        <end position="180"/>
    </location>
</feature>
<feature type="strand" evidence="19">
    <location>
        <begin position="183"/>
        <end position="192"/>
    </location>
</feature>
<feature type="strand" evidence="18">
    <location>
        <begin position="202"/>
        <end position="204"/>
    </location>
</feature>
<feature type="strand" evidence="19">
    <location>
        <begin position="207"/>
        <end position="209"/>
    </location>
</feature>
<feature type="helix" evidence="19">
    <location>
        <begin position="216"/>
        <end position="218"/>
    </location>
</feature>
<organismHost>
    <name type="scientific">Canis lupus familiaris</name>
    <name type="common">Dog</name>
    <name type="synonym">Canis familiaris</name>
    <dbReference type="NCBI Taxonomy" id="9615"/>
</organismHost>
<organismHost>
    <name type="scientific">Homo sapiens</name>
    <name type="common">Human</name>
    <dbReference type="NCBI Taxonomy" id="9606"/>
</organismHost>
<gene>
    <name type="primary">P/V</name>
</gene>